<feature type="chain" id="PRO_1000090482" description="UDP-N-acetylglucosamine--N-acetylmuramyl-(pentapeptide) pyrophosphoryl-undecaprenol N-acetylglucosamine transferase">
    <location>
        <begin position="1"/>
        <end position="339"/>
    </location>
</feature>
<feature type="binding site" evidence="1">
    <location>
        <begin position="11"/>
        <end position="13"/>
    </location>
    <ligand>
        <name>UDP-N-acetyl-alpha-D-glucosamine</name>
        <dbReference type="ChEBI" id="CHEBI:57705"/>
    </ligand>
</feature>
<feature type="binding site" evidence="1">
    <location>
        <position position="127"/>
    </location>
    <ligand>
        <name>UDP-N-acetyl-alpha-D-glucosamine</name>
        <dbReference type="ChEBI" id="CHEBI:57705"/>
    </ligand>
</feature>
<feature type="binding site" evidence="1">
    <location>
        <position position="170"/>
    </location>
    <ligand>
        <name>UDP-N-acetyl-alpha-D-glucosamine</name>
        <dbReference type="ChEBI" id="CHEBI:57705"/>
    </ligand>
</feature>
<feature type="binding site" evidence="1">
    <location>
        <position position="188"/>
    </location>
    <ligand>
        <name>UDP-N-acetyl-alpha-D-glucosamine</name>
        <dbReference type="ChEBI" id="CHEBI:57705"/>
    </ligand>
</feature>
<feature type="binding site" evidence="1">
    <location>
        <position position="235"/>
    </location>
    <ligand>
        <name>UDP-N-acetyl-alpha-D-glucosamine</name>
        <dbReference type="ChEBI" id="CHEBI:57705"/>
    </ligand>
</feature>
<feature type="binding site" evidence="1">
    <location>
        <position position="280"/>
    </location>
    <ligand>
        <name>UDP-N-acetyl-alpha-D-glucosamine</name>
        <dbReference type="ChEBI" id="CHEBI:57705"/>
    </ligand>
</feature>
<accession>B1L9S1</accession>
<comment type="function">
    <text evidence="1">Cell wall formation. Catalyzes the transfer of a GlcNAc subunit on undecaprenyl-pyrophosphoryl-MurNAc-pentapeptide (lipid intermediate I) to form undecaprenyl-pyrophosphoryl-MurNAc-(pentapeptide)GlcNAc (lipid intermediate II).</text>
</comment>
<comment type="catalytic activity">
    <reaction evidence="1">
        <text>di-trans,octa-cis-undecaprenyl diphospho-N-acetyl-alpha-D-muramoyl-L-alanyl-D-glutamyl-meso-2,6-diaminopimeloyl-D-alanyl-D-alanine + UDP-N-acetyl-alpha-D-glucosamine = di-trans,octa-cis-undecaprenyl diphospho-[N-acetyl-alpha-D-glucosaminyl-(1-&gt;4)]-N-acetyl-alpha-D-muramoyl-L-alanyl-D-glutamyl-meso-2,6-diaminopimeloyl-D-alanyl-D-alanine + UDP + H(+)</text>
        <dbReference type="Rhea" id="RHEA:31227"/>
        <dbReference type="ChEBI" id="CHEBI:15378"/>
        <dbReference type="ChEBI" id="CHEBI:57705"/>
        <dbReference type="ChEBI" id="CHEBI:58223"/>
        <dbReference type="ChEBI" id="CHEBI:61387"/>
        <dbReference type="ChEBI" id="CHEBI:61388"/>
        <dbReference type="EC" id="2.4.1.227"/>
    </reaction>
</comment>
<comment type="pathway">
    <text evidence="1">Cell wall biogenesis; peptidoglycan biosynthesis.</text>
</comment>
<comment type="subcellular location">
    <subcellularLocation>
        <location evidence="1">Cell inner membrane</location>
        <topology evidence="1">Peripheral membrane protein</topology>
        <orientation evidence="1">Cytoplasmic side</orientation>
    </subcellularLocation>
</comment>
<comment type="similarity">
    <text evidence="1">Belongs to the glycosyltransferase 28 family. MurG subfamily.</text>
</comment>
<protein>
    <recommendedName>
        <fullName evidence="1">UDP-N-acetylglucosamine--N-acetylmuramyl-(pentapeptide) pyrophosphoryl-undecaprenol N-acetylglucosamine transferase</fullName>
        <ecNumber evidence="1">2.4.1.227</ecNumber>
    </recommendedName>
    <alternativeName>
        <fullName evidence="1">Undecaprenyl-PP-MurNAc-pentapeptide-UDPGlcNAc GlcNAc transferase</fullName>
    </alternativeName>
</protein>
<name>MURG_THESQ</name>
<evidence type="ECO:0000255" key="1">
    <source>
        <dbReference type="HAMAP-Rule" id="MF_00033"/>
    </source>
</evidence>
<keyword id="KW-0131">Cell cycle</keyword>
<keyword id="KW-0132">Cell division</keyword>
<keyword id="KW-0997">Cell inner membrane</keyword>
<keyword id="KW-1003">Cell membrane</keyword>
<keyword id="KW-0133">Cell shape</keyword>
<keyword id="KW-0961">Cell wall biogenesis/degradation</keyword>
<keyword id="KW-0328">Glycosyltransferase</keyword>
<keyword id="KW-0472">Membrane</keyword>
<keyword id="KW-0573">Peptidoglycan synthesis</keyword>
<keyword id="KW-0808">Transferase</keyword>
<reference key="1">
    <citation type="journal article" date="2011" name="J. Bacteriol.">
        <title>Genome sequence of Thermotoga sp. strain RQ2, a hyperthermophilic bacterium isolated from a geothermally heated region of the seafloor near Ribeira Quente, the Azores.</title>
        <authorList>
            <person name="Swithers K.S."/>
            <person name="DiPippo J.L."/>
            <person name="Bruce D.C."/>
            <person name="Detter C."/>
            <person name="Tapia R."/>
            <person name="Han S."/>
            <person name="Saunders E."/>
            <person name="Goodwin L.A."/>
            <person name="Han J."/>
            <person name="Woyke T."/>
            <person name="Pitluck S."/>
            <person name="Pennacchio L."/>
            <person name="Nolan M."/>
            <person name="Mikhailova N."/>
            <person name="Lykidis A."/>
            <person name="Land M.L."/>
            <person name="Brettin T."/>
            <person name="Stetter K.O."/>
            <person name="Nelson K.E."/>
            <person name="Gogarten J.P."/>
            <person name="Noll K.M."/>
        </authorList>
    </citation>
    <scope>NUCLEOTIDE SEQUENCE [LARGE SCALE GENOMIC DNA]</scope>
    <source>
        <strain>RQ2</strain>
    </source>
</reference>
<sequence length="339" mass="37655">MIKIAAAGGGTGGHLYPLLAILETLAKRVDVKVLFFAVKGKIDERVVRKDHPEFETVSIDVRGLLRPLHHPKNLWRTLKIGIATIEVKKHLKRFKPDLVVLTGGYISGVVGLAAKDLGIPIFVHEQNVVPGLAVKVLSQYAKKVFVSFERTRNYLREWQDKIVVTGCPVRETEKEAPLKDFVLVLGGSLGSEAINELMEKVYPELQETQFVHSTGSDDWTKRLSAFPNVTALTYIDPMGAYWKKAIASISRAGASTIAEMMYYGVPGILIPWESSAESHQLENALEAERLGYGIVIRENEASPRKIIESIDKVVKKGKIEKMKENPASKISEEILGEIM</sequence>
<dbReference type="EC" id="2.4.1.227" evidence="1"/>
<dbReference type="EMBL" id="CP000969">
    <property type="protein sequence ID" value="ACB09069.1"/>
    <property type="molecule type" value="Genomic_DNA"/>
</dbReference>
<dbReference type="RefSeq" id="WP_012310700.1">
    <property type="nucleotide sequence ID" value="NC_010483.1"/>
</dbReference>
<dbReference type="SMR" id="B1L9S1"/>
<dbReference type="CAZy" id="GT28">
    <property type="family name" value="Glycosyltransferase Family 28"/>
</dbReference>
<dbReference type="KEGG" id="trq:TRQ2_0716"/>
<dbReference type="HOGENOM" id="CLU_037404_0_1_0"/>
<dbReference type="UniPathway" id="UPA00219"/>
<dbReference type="Proteomes" id="UP000001687">
    <property type="component" value="Chromosome"/>
</dbReference>
<dbReference type="GO" id="GO:0005886">
    <property type="term" value="C:plasma membrane"/>
    <property type="evidence" value="ECO:0007669"/>
    <property type="project" value="UniProtKB-SubCell"/>
</dbReference>
<dbReference type="GO" id="GO:0051991">
    <property type="term" value="F:UDP-N-acetyl-D-glucosamine:N-acetylmuramoyl-L-alanyl-D-glutamyl-meso-2,6-diaminopimelyl-D-alanyl-D-alanine-diphosphoundecaprenol 4-beta-N-acetylglucosaminlytransferase activity"/>
    <property type="evidence" value="ECO:0007669"/>
    <property type="project" value="RHEA"/>
</dbReference>
<dbReference type="GO" id="GO:0050511">
    <property type="term" value="F:undecaprenyldiphospho-muramoylpentapeptide beta-N-acetylglucosaminyltransferase activity"/>
    <property type="evidence" value="ECO:0007669"/>
    <property type="project" value="UniProtKB-UniRule"/>
</dbReference>
<dbReference type="GO" id="GO:0005975">
    <property type="term" value="P:carbohydrate metabolic process"/>
    <property type="evidence" value="ECO:0007669"/>
    <property type="project" value="InterPro"/>
</dbReference>
<dbReference type="GO" id="GO:0051301">
    <property type="term" value="P:cell division"/>
    <property type="evidence" value="ECO:0007669"/>
    <property type="project" value="UniProtKB-KW"/>
</dbReference>
<dbReference type="GO" id="GO:0071555">
    <property type="term" value="P:cell wall organization"/>
    <property type="evidence" value="ECO:0007669"/>
    <property type="project" value="UniProtKB-KW"/>
</dbReference>
<dbReference type="GO" id="GO:0030259">
    <property type="term" value="P:lipid glycosylation"/>
    <property type="evidence" value="ECO:0007669"/>
    <property type="project" value="UniProtKB-UniRule"/>
</dbReference>
<dbReference type="GO" id="GO:0009252">
    <property type="term" value="P:peptidoglycan biosynthetic process"/>
    <property type="evidence" value="ECO:0007669"/>
    <property type="project" value="UniProtKB-UniRule"/>
</dbReference>
<dbReference type="GO" id="GO:0008360">
    <property type="term" value="P:regulation of cell shape"/>
    <property type="evidence" value="ECO:0007669"/>
    <property type="project" value="UniProtKB-KW"/>
</dbReference>
<dbReference type="CDD" id="cd03785">
    <property type="entry name" value="GT28_MurG"/>
    <property type="match status" value="1"/>
</dbReference>
<dbReference type="Gene3D" id="3.40.50.2000">
    <property type="entry name" value="Glycogen Phosphorylase B"/>
    <property type="match status" value="2"/>
</dbReference>
<dbReference type="HAMAP" id="MF_00033">
    <property type="entry name" value="MurG"/>
    <property type="match status" value="1"/>
</dbReference>
<dbReference type="InterPro" id="IPR006009">
    <property type="entry name" value="GlcNAc_MurG"/>
</dbReference>
<dbReference type="InterPro" id="IPR007235">
    <property type="entry name" value="Glyco_trans_28_C"/>
</dbReference>
<dbReference type="InterPro" id="IPR004276">
    <property type="entry name" value="GlycoTrans_28_N"/>
</dbReference>
<dbReference type="NCBIfam" id="TIGR01133">
    <property type="entry name" value="murG"/>
    <property type="match status" value="1"/>
</dbReference>
<dbReference type="PANTHER" id="PTHR21015:SF22">
    <property type="entry name" value="GLYCOSYLTRANSFERASE"/>
    <property type="match status" value="1"/>
</dbReference>
<dbReference type="PANTHER" id="PTHR21015">
    <property type="entry name" value="UDP-N-ACETYLGLUCOSAMINE--N-ACETYLMURAMYL-(PENTAPEPTIDE) PYROPHOSPHORYL-UNDECAPRENOL N-ACETYLGLUCOSAMINE TRANSFERASE 1"/>
    <property type="match status" value="1"/>
</dbReference>
<dbReference type="Pfam" id="PF04101">
    <property type="entry name" value="Glyco_tran_28_C"/>
    <property type="match status" value="1"/>
</dbReference>
<dbReference type="Pfam" id="PF03033">
    <property type="entry name" value="Glyco_transf_28"/>
    <property type="match status" value="1"/>
</dbReference>
<dbReference type="SUPFAM" id="SSF53756">
    <property type="entry name" value="UDP-Glycosyltransferase/glycogen phosphorylase"/>
    <property type="match status" value="1"/>
</dbReference>
<gene>
    <name evidence="1" type="primary">murG</name>
    <name type="ordered locus">TRQ2_0716</name>
</gene>
<proteinExistence type="inferred from homology"/>
<organism>
    <name type="scientific">Thermotoga sp. (strain RQ2)</name>
    <dbReference type="NCBI Taxonomy" id="126740"/>
    <lineage>
        <taxon>Bacteria</taxon>
        <taxon>Thermotogati</taxon>
        <taxon>Thermotogota</taxon>
        <taxon>Thermotogae</taxon>
        <taxon>Thermotogales</taxon>
        <taxon>Thermotogaceae</taxon>
        <taxon>Thermotoga</taxon>
    </lineage>
</organism>